<organism>
    <name type="scientific">Histophilus somni (strain 2336)</name>
    <name type="common">Haemophilus somnus</name>
    <dbReference type="NCBI Taxonomy" id="228400"/>
    <lineage>
        <taxon>Bacteria</taxon>
        <taxon>Pseudomonadati</taxon>
        <taxon>Pseudomonadota</taxon>
        <taxon>Gammaproteobacteria</taxon>
        <taxon>Pasteurellales</taxon>
        <taxon>Pasteurellaceae</taxon>
        <taxon>Histophilus</taxon>
    </lineage>
</organism>
<feature type="chain" id="PRO_0000341757" description="2-succinyl-5-enolpyruvyl-6-hydroxy-3-cyclohexene-1-carboxylate synthase">
    <location>
        <begin position="1"/>
        <end position="568"/>
    </location>
</feature>
<evidence type="ECO:0000255" key="1">
    <source>
        <dbReference type="HAMAP-Rule" id="MF_01659"/>
    </source>
</evidence>
<dbReference type="EC" id="2.2.1.9" evidence="1"/>
<dbReference type="EMBL" id="CP000947">
    <property type="protein sequence ID" value="ACA32654.1"/>
    <property type="molecule type" value="Genomic_DNA"/>
</dbReference>
<dbReference type="RefSeq" id="WP_012341772.1">
    <property type="nucleotide sequence ID" value="NC_010519.1"/>
</dbReference>
<dbReference type="SMR" id="B0UT51"/>
<dbReference type="STRING" id="228400.HSM_0968"/>
<dbReference type="GeneID" id="31487269"/>
<dbReference type="KEGG" id="hsm:HSM_0968"/>
<dbReference type="HOGENOM" id="CLU_006051_3_0_6"/>
<dbReference type="UniPathway" id="UPA00079"/>
<dbReference type="UniPathway" id="UPA01057">
    <property type="reaction ID" value="UER00164"/>
</dbReference>
<dbReference type="GO" id="GO:0070204">
    <property type="term" value="F:2-succinyl-5-enolpyruvyl-6-hydroxy-3-cyclohexene-1-carboxylic-acid synthase activity"/>
    <property type="evidence" value="ECO:0007669"/>
    <property type="project" value="UniProtKB-UniRule"/>
</dbReference>
<dbReference type="GO" id="GO:0000287">
    <property type="term" value="F:magnesium ion binding"/>
    <property type="evidence" value="ECO:0007669"/>
    <property type="project" value="UniProtKB-UniRule"/>
</dbReference>
<dbReference type="GO" id="GO:0030145">
    <property type="term" value="F:manganese ion binding"/>
    <property type="evidence" value="ECO:0007669"/>
    <property type="project" value="UniProtKB-UniRule"/>
</dbReference>
<dbReference type="GO" id="GO:0030976">
    <property type="term" value="F:thiamine pyrophosphate binding"/>
    <property type="evidence" value="ECO:0007669"/>
    <property type="project" value="UniProtKB-UniRule"/>
</dbReference>
<dbReference type="GO" id="GO:0009234">
    <property type="term" value="P:menaquinone biosynthetic process"/>
    <property type="evidence" value="ECO:0007669"/>
    <property type="project" value="UniProtKB-UniRule"/>
</dbReference>
<dbReference type="CDD" id="cd07037">
    <property type="entry name" value="TPP_PYR_MenD"/>
    <property type="match status" value="1"/>
</dbReference>
<dbReference type="CDD" id="cd02009">
    <property type="entry name" value="TPP_SHCHC_synthase"/>
    <property type="match status" value="1"/>
</dbReference>
<dbReference type="Gene3D" id="3.40.50.970">
    <property type="match status" value="2"/>
</dbReference>
<dbReference type="Gene3D" id="3.40.50.1220">
    <property type="entry name" value="TPP-binding domain"/>
    <property type="match status" value="1"/>
</dbReference>
<dbReference type="HAMAP" id="MF_01659">
    <property type="entry name" value="MenD"/>
    <property type="match status" value="1"/>
</dbReference>
<dbReference type="InterPro" id="IPR004433">
    <property type="entry name" value="MenaQ_synth_MenD"/>
</dbReference>
<dbReference type="InterPro" id="IPR032264">
    <property type="entry name" value="MenD_middle"/>
</dbReference>
<dbReference type="InterPro" id="IPR029061">
    <property type="entry name" value="THDP-binding"/>
</dbReference>
<dbReference type="InterPro" id="IPR012001">
    <property type="entry name" value="Thiamin_PyroP_enz_TPP-bd_dom"/>
</dbReference>
<dbReference type="InterPro" id="IPR011766">
    <property type="entry name" value="TPP_enzyme_TPP-bd"/>
</dbReference>
<dbReference type="NCBIfam" id="TIGR00173">
    <property type="entry name" value="menD"/>
    <property type="match status" value="1"/>
</dbReference>
<dbReference type="PANTHER" id="PTHR42916">
    <property type="entry name" value="2-SUCCINYL-5-ENOLPYRUVYL-6-HYDROXY-3-CYCLOHEXENE-1-CARBOXYLATE SYNTHASE"/>
    <property type="match status" value="1"/>
</dbReference>
<dbReference type="PANTHER" id="PTHR42916:SF1">
    <property type="entry name" value="PROTEIN PHYLLO, CHLOROPLASTIC"/>
    <property type="match status" value="1"/>
</dbReference>
<dbReference type="Pfam" id="PF02775">
    <property type="entry name" value="TPP_enzyme_C"/>
    <property type="match status" value="1"/>
</dbReference>
<dbReference type="Pfam" id="PF16582">
    <property type="entry name" value="TPP_enzyme_M_2"/>
    <property type="match status" value="1"/>
</dbReference>
<dbReference type="Pfam" id="PF02776">
    <property type="entry name" value="TPP_enzyme_N"/>
    <property type="match status" value="1"/>
</dbReference>
<dbReference type="PIRSF" id="PIRSF004983">
    <property type="entry name" value="MenD"/>
    <property type="match status" value="1"/>
</dbReference>
<dbReference type="SUPFAM" id="SSF52518">
    <property type="entry name" value="Thiamin diphosphate-binding fold (THDP-binding)"/>
    <property type="match status" value="2"/>
</dbReference>
<comment type="function">
    <text evidence="1">Catalyzes the thiamine diphosphate-dependent decarboxylation of 2-oxoglutarate and the subsequent addition of the resulting succinic semialdehyde-thiamine pyrophosphate anion to isochorismate to yield 2-succinyl-5-enolpyruvyl-6-hydroxy-3-cyclohexene-1-carboxylate (SEPHCHC).</text>
</comment>
<comment type="catalytic activity">
    <reaction evidence="1">
        <text>isochorismate + 2-oxoglutarate + H(+) = 5-enolpyruvoyl-6-hydroxy-2-succinyl-cyclohex-3-ene-1-carboxylate + CO2</text>
        <dbReference type="Rhea" id="RHEA:25593"/>
        <dbReference type="ChEBI" id="CHEBI:15378"/>
        <dbReference type="ChEBI" id="CHEBI:16526"/>
        <dbReference type="ChEBI" id="CHEBI:16810"/>
        <dbReference type="ChEBI" id="CHEBI:29780"/>
        <dbReference type="ChEBI" id="CHEBI:58818"/>
        <dbReference type="EC" id="2.2.1.9"/>
    </reaction>
</comment>
<comment type="cofactor">
    <cofactor evidence="1">
        <name>Mg(2+)</name>
        <dbReference type="ChEBI" id="CHEBI:18420"/>
    </cofactor>
    <cofactor evidence="1">
        <name>Mn(2+)</name>
        <dbReference type="ChEBI" id="CHEBI:29035"/>
    </cofactor>
</comment>
<comment type="cofactor">
    <cofactor evidence="1">
        <name>thiamine diphosphate</name>
        <dbReference type="ChEBI" id="CHEBI:58937"/>
    </cofactor>
    <text evidence="1">Binds 1 thiamine pyrophosphate per subunit.</text>
</comment>
<comment type="pathway">
    <text evidence="1">Quinol/quinone metabolism; 1,4-dihydroxy-2-naphthoate biosynthesis; 1,4-dihydroxy-2-naphthoate from chorismate: step 2/7.</text>
</comment>
<comment type="pathway">
    <text evidence="1">Quinol/quinone metabolism; menaquinone biosynthesis.</text>
</comment>
<comment type="subunit">
    <text evidence="1">Homodimer.</text>
</comment>
<comment type="similarity">
    <text evidence="1">Belongs to the TPP enzyme family. MenD subfamily.</text>
</comment>
<keyword id="KW-0460">Magnesium</keyword>
<keyword id="KW-0464">Manganese</keyword>
<keyword id="KW-0474">Menaquinone biosynthesis</keyword>
<keyword id="KW-0479">Metal-binding</keyword>
<keyword id="KW-0786">Thiamine pyrophosphate</keyword>
<keyword id="KW-0808">Transferase</keyword>
<accession>B0UT51</accession>
<name>MEND_HISS2</name>
<gene>
    <name evidence="1" type="primary">menD</name>
    <name type="ordered locus">HSM_0968</name>
</gene>
<proteinExistence type="inferred from homology"/>
<protein>
    <recommendedName>
        <fullName evidence="1">2-succinyl-5-enolpyruvyl-6-hydroxy-3-cyclohexene-1-carboxylate synthase</fullName>
        <shortName evidence="1">SEPHCHC synthase</shortName>
        <ecNumber evidence="1">2.2.1.9</ecNumber>
    </recommendedName>
    <alternativeName>
        <fullName evidence="1">Menaquinone biosynthesis protein MenD</fullName>
    </alternativeName>
</protein>
<reference key="1">
    <citation type="submission" date="2008-02" db="EMBL/GenBank/DDBJ databases">
        <title>Complete sequence of Haemophilus somnus 2336.</title>
        <authorList>
            <consortium name="US DOE Joint Genome Institute"/>
            <person name="Siddaramappa S."/>
            <person name="Duncan A.J."/>
            <person name="Challacombe J.F."/>
            <person name="Rainey D."/>
            <person name="Gillaspy A.F."/>
            <person name="Carson M."/>
            <person name="Gipson J."/>
            <person name="Gipson M."/>
            <person name="Bruce D."/>
            <person name="Detter J.C."/>
            <person name="Han C.S."/>
            <person name="Land M."/>
            <person name="Tapia R."/>
            <person name="Thompson L.S."/>
            <person name="Orvis J."/>
            <person name="Zaitshik J."/>
            <person name="Barnes G."/>
            <person name="Brettin T.S."/>
            <person name="Dyer D.W."/>
            <person name="Inzana T.J."/>
        </authorList>
    </citation>
    <scope>NUCLEOTIDE SEQUENCE [LARGE SCALE GENOMIC DNA]</scope>
    <source>
        <strain>2336</strain>
    </source>
</reference>
<sequence length="568" mass="63828">MSASVFNRCWSKVILETLSRQGVSHFCIAPGSRSTPLTLEAIRLQENGRGTCHTHFDERGLGFFALGIAKASKKPVAVIVTSGTATANLYPAIIEARQTDVPLIILTADRPPELLECGANQAILQQNMFAQYPIASINLPRPSQNYSAQWLISVLDQACFRQKQGGVIHINVPFAEPLYNANNDEIDLHPWLSNIQSWLTQNKNWIQHQEQHTEVITHKYWDQWRTKKGIIIVGRLPSEQAMGIAEWAENMGWIMITDIQSHVKPTLPYADIWLANQTVRKKLLQAEIVIQFGSGFIGKRINQFLAEFKGEYWIIENNQKAVDPYHHAHTRFNAKPHHWLRAHPPMRKKPWLLEPLALAKFCADFIKQRVGSNLNEASLAHNIELLLPKSNSVLFLGNSLFVRLADALSQPSANYPIYTNRGASGIDGLLATAAGIAVGSEQTLVAMIGDTSTLYDLNSFALFKQLNQPAIIFVINNNGGAIFDMLPVDIAVKEKYYRMSHYLEFSHIAAMFDLKYARPYTWADLATVLKQAYSRRETTIIEIKINPNDGSNIYKDLIDKIGHALIGV</sequence>